<organism>
    <name type="scientific">Vibrio vulnificus (strain CMCP6)</name>
    <dbReference type="NCBI Taxonomy" id="216895"/>
    <lineage>
        <taxon>Bacteria</taxon>
        <taxon>Pseudomonadati</taxon>
        <taxon>Pseudomonadota</taxon>
        <taxon>Gammaproteobacteria</taxon>
        <taxon>Vibrionales</taxon>
        <taxon>Vibrionaceae</taxon>
        <taxon>Vibrio</taxon>
    </lineage>
</organism>
<evidence type="ECO:0000255" key="1">
    <source>
        <dbReference type="HAMAP-Rule" id="MF_00332"/>
    </source>
</evidence>
<evidence type="ECO:0000256" key="2">
    <source>
        <dbReference type="SAM" id="MobiDB-lite"/>
    </source>
</evidence>
<gene>
    <name evidence="1" type="primary">dnaK</name>
    <name type="ordered locus">VV1_0357</name>
</gene>
<comment type="function">
    <text evidence="1">Acts as a chaperone.</text>
</comment>
<comment type="induction">
    <text evidence="1">By stress conditions e.g. heat shock.</text>
</comment>
<comment type="similarity">
    <text evidence="1">Belongs to the heat shock protein 70 family.</text>
</comment>
<proteinExistence type="inferred from homology"/>
<dbReference type="EMBL" id="AE016795">
    <property type="protein sequence ID" value="AAO08882.1"/>
    <property type="molecule type" value="Genomic_DNA"/>
</dbReference>
<dbReference type="RefSeq" id="WP_011078453.1">
    <property type="nucleotide sequence ID" value="NC_004459.3"/>
</dbReference>
<dbReference type="SMR" id="Q8DF66"/>
<dbReference type="KEGG" id="vvu:VV1_0357"/>
<dbReference type="HOGENOM" id="CLU_005965_2_1_6"/>
<dbReference type="Proteomes" id="UP000002275">
    <property type="component" value="Chromosome 1"/>
</dbReference>
<dbReference type="GO" id="GO:0005524">
    <property type="term" value="F:ATP binding"/>
    <property type="evidence" value="ECO:0007669"/>
    <property type="project" value="UniProtKB-UniRule"/>
</dbReference>
<dbReference type="GO" id="GO:0140662">
    <property type="term" value="F:ATP-dependent protein folding chaperone"/>
    <property type="evidence" value="ECO:0007669"/>
    <property type="project" value="InterPro"/>
</dbReference>
<dbReference type="GO" id="GO:0051082">
    <property type="term" value="F:unfolded protein binding"/>
    <property type="evidence" value="ECO:0007669"/>
    <property type="project" value="InterPro"/>
</dbReference>
<dbReference type="CDD" id="cd10234">
    <property type="entry name" value="ASKHA_NBD_HSP70_DnaK-like"/>
    <property type="match status" value="1"/>
</dbReference>
<dbReference type="FunFam" id="2.60.34.10:FF:000014">
    <property type="entry name" value="Chaperone protein DnaK HSP70"/>
    <property type="match status" value="1"/>
</dbReference>
<dbReference type="FunFam" id="1.20.1270.10:FF:000001">
    <property type="entry name" value="Molecular chaperone DnaK"/>
    <property type="match status" value="1"/>
</dbReference>
<dbReference type="FunFam" id="3.30.420.40:FF:000004">
    <property type="entry name" value="Molecular chaperone DnaK"/>
    <property type="match status" value="1"/>
</dbReference>
<dbReference type="FunFam" id="3.90.640.10:FF:000003">
    <property type="entry name" value="Molecular chaperone DnaK"/>
    <property type="match status" value="1"/>
</dbReference>
<dbReference type="Gene3D" id="1.20.1270.10">
    <property type="match status" value="1"/>
</dbReference>
<dbReference type="Gene3D" id="3.30.420.40">
    <property type="match status" value="2"/>
</dbReference>
<dbReference type="Gene3D" id="3.90.640.10">
    <property type="entry name" value="Actin, Chain A, domain 4"/>
    <property type="match status" value="1"/>
</dbReference>
<dbReference type="Gene3D" id="2.60.34.10">
    <property type="entry name" value="Substrate Binding Domain Of DNAk, Chain A, domain 1"/>
    <property type="match status" value="1"/>
</dbReference>
<dbReference type="HAMAP" id="MF_00332">
    <property type="entry name" value="DnaK"/>
    <property type="match status" value="1"/>
</dbReference>
<dbReference type="InterPro" id="IPR043129">
    <property type="entry name" value="ATPase_NBD"/>
</dbReference>
<dbReference type="InterPro" id="IPR012725">
    <property type="entry name" value="Chaperone_DnaK"/>
</dbReference>
<dbReference type="InterPro" id="IPR018181">
    <property type="entry name" value="Heat_shock_70_CS"/>
</dbReference>
<dbReference type="InterPro" id="IPR029048">
    <property type="entry name" value="HSP70_C_sf"/>
</dbReference>
<dbReference type="InterPro" id="IPR029047">
    <property type="entry name" value="HSP70_peptide-bd_sf"/>
</dbReference>
<dbReference type="InterPro" id="IPR013126">
    <property type="entry name" value="Hsp_70_fam"/>
</dbReference>
<dbReference type="NCBIfam" id="NF001413">
    <property type="entry name" value="PRK00290.1"/>
    <property type="match status" value="1"/>
</dbReference>
<dbReference type="NCBIfam" id="NF003520">
    <property type="entry name" value="PRK05183.1"/>
    <property type="match status" value="1"/>
</dbReference>
<dbReference type="NCBIfam" id="TIGR02350">
    <property type="entry name" value="prok_dnaK"/>
    <property type="match status" value="1"/>
</dbReference>
<dbReference type="PANTHER" id="PTHR19375">
    <property type="entry name" value="HEAT SHOCK PROTEIN 70KDA"/>
    <property type="match status" value="1"/>
</dbReference>
<dbReference type="Pfam" id="PF00012">
    <property type="entry name" value="HSP70"/>
    <property type="match status" value="1"/>
</dbReference>
<dbReference type="PRINTS" id="PR00301">
    <property type="entry name" value="HEATSHOCK70"/>
</dbReference>
<dbReference type="SUPFAM" id="SSF53067">
    <property type="entry name" value="Actin-like ATPase domain"/>
    <property type="match status" value="2"/>
</dbReference>
<dbReference type="SUPFAM" id="SSF100934">
    <property type="entry name" value="Heat shock protein 70kD (HSP70), C-terminal subdomain"/>
    <property type="match status" value="1"/>
</dbReference>
<dbReference type="SUPFAM" id="SSF100920">
    <property type="entry name" value="Heat shock protein 70kD (HSP70), peptide-binding domain"/>
    <property type="match status" value="1"/>
</dbReference>
<dbReference type="PROSITE" id="PS00297">
    <property type="entry name" value="HSP70_1"/>
    <property type="match status" value="1"/>
</dbReference>
<dbReference type="PROSITE" id="PS00329">
    <property type="entry name" value="HSP70_2"/>
    <property type="match status" value="1"/>
</dbReference>
<dbReference type="PROSITE" id="PS01036">
    <property type="entry name" value="HSP70_3"/>
    <property type="match status" value="1"/>
</dbReference>
<protein>
    <recommendedName>
        <fullName evidence="1">Chaperone protein DnaK</fullName>
    </recommendedName>
    <alternativeName>
        <fullName evidence="1">HSP70</fullName>
    </alternativeName>
    <alternativeName>
        <fullName evidence="1">Heat shock 70 kDa protein</fullName>
    </alternativeName>
    <alternativeName>
        <fullName evidence="1">Heat shock protein 70</fullName>
    </alternativeName>
</protein>
<sequence length="636" mass="68793">MGKIIGIDLGTTNSCVAVLDGDKPRVIENAEGERTTPSVIAYTDGETLVGQPAKRQAVTNPENTLFAIKRLIGRRFEDEEVQRDIEIMPYKIVKADNGDAWVEAKGQKMAAPQVSAEVLKKMKKTAEDFLGEEVTGAVITVPAYFNDAQRQATKDAGRIAGLEVKRIINEPTAAALAYGLDKQGGDRTIAVYDLGGGTFDISIIEIDEVEGEKTFEVLATNGDTHLGGEDFDNRLINYLVAEFKKDQGIDLKNDPLAMQRVKEAAEKAKIELSSTNQTDVNLPYITADATGPKHMNIKVTRAKLESLVEDLVQRSLEPLKVALADADLSVGDITDVILVGGQTRMPMVQAKVTEFFGKEPRRDVNPDEAVAVGAAVQGGVLAGDVKDVLLLDVTPLSLGIETMGGVMTKLVEKNTTIPTKANQVFSTAEDNQSAVTIHVLQGERKQAMYNKSLGQFNLEGINPAPRGMPQIEVTFDLDADGILHVSAKDKQTGKEQKITIQASGGLSDAEIEKMVQEAEANKEADKKFEELATARNQADQIIHGTRKQVEEAGEALPADEKAKIETAISELEEARKGEDKEAIEAKIQALMAAAQKLMEIAQQQAQAQQGSAEAGAQSQEDDVVDAEFEEVKDDKK</sequence>
<name>DNAK_VIBVU</name>
<keyword id="KW-0067">ATP-binding</keyword>
<keyword id="KW-0143">Chaperone</keyword>
<keyword id="KW-0547">Nucleotide-binding</keyword>
<keyword id="KW-0597">Phosphoprotein</keyword>
<keyword id="KW-0346">Stress response</keyword>
<accession>Q8DF66</accession>
<feature type="chain" id="PRO_0000078585" description="Chaperone protein DnaK">
    <location>
        <begin position="1"/>
        <end position="636"/>
    </location>
</feature>
<feature type="region of interest" description="Disordered" evidence="2">
    <location>
        <begin position="600"/>
        <end position="636"/>
    </location>
</feature>
<feature type="compositionally biased region" description="Low complexity" evidence="2">
    <location>
        <begin position="601"/>
        <end position="618"/>
    </location>
</feature>
<feature type="compositionally biased region" description="Acidic residues" evidence="2">
    <location>
        <begin position="619"/>
        <end position="636"/>
    </location>
</feature>
<feature type="modified residue" description="Phosphothreonine; by autocatalysis" evidence="1">
    <location>
        <position position="198"/>
    </location>
</feature>
<reference key="1">
    <citation type="submission" date="2002-12" db="EMBL/GenBank/DDBJ databases">
        <title>Complete genome sequence of Vibrio vulnificus CMCP6.</title>
        <authorList>
            <person name="Rhee J.H."/>
            <person name="Kim S.Y."/>
            <person name="Chung S.S."/>
            <person name="Kim J.J."/>
            <person name="Moon Y.H."/>
            <person name="Jeong H."/>
            <person name="Choy H.E."/>
        </authorList>
    </citation>
    <scope>NUCLEOTIDE SEQUENCE [LARGE SCALE GENOMIC DNA]</scope>
    <source>
        <strain>CMCP6</strain>
    </source>
</reference>